<feature type="chain" id="PRO_0000246673" description="Probable kinetochore protein SPC25">
    <location>
        <begin position="1"/>
        <end position="272"/>
    </location>
</feature>
<feature type="coiled-coil region" evidence="3">
    <location>
        <begin position="62"/>
        <end position="174"/>
    </location>
</feature>
<evidence type="ECO:0000250" key="1"/>
<evidence type="ECO:0000250" key="2">
    <source>
        <dbReference type="UniProtKB" id="P40014"/>
    </source>
</evidence>
<evidence type="ECO:0000255" key="3"/>
<evidence type="ECO:0000305" key="4"/>
<sequence length="272" mass="30873">MAPTTYAVPPRPASLHFLLESSTSKNGVPSLDLRWEPFQRHIESFLNAIDAYTQAARTEIVARATDHTAAVRDLKADKEEMERGIQLQRESEGEMLATLEAERHVVADLNASLSHLQSSLTKIKEKSSALDAELQSERKEVKAMQAEKERQTNVLNNMRERDTTELKQLEEALGWRVEGIKQDQLLMRFTLIDPEDPAREFSIIVDVSKQVYSVPNCDPPIPSLPDLVRQLNFDRDLFAFIKRVRIAFRALIPNPPNPSTKFDDLTGPSRSR</sequence>
<organism>
    <name type="scientific">Cryptococcus neoformans var. neoformans serotype D (strain JEC21 / ATCC MYA-565)</name>
    <name type="common">Filobasidiella neoformans</name>
    <dbReference type="NCBI Taxonomy" id="214684"/>
    <lineage>
        <taxon>Eukaryota</taxon>
        <taxon>Fungi</taxon>
        <taxon>Dikarya</taxon>
        <taxon>Basidiomycota</taxon>
        <taxon>Agaricomycotina</taxon>
        <taxon>Tremellomycetes</taxon>
        <taxon>Tremellales</taxon>
        <taxon>Cryptococcaceae</taxon>
        <taxon>Cryptococcus</taxon>
        <taxon>Cryptococcus neoformans species complex</taxon>
    </lineage>
</organism>
<accession>P0CR66</accession>
<accession>Q55S37</accession>
<accession>Q5KGI8</accession>
<keyword id="KW-0131">Cell cycle</keyword>
<keyword id="KW-0132">Cell division</keyword>
<keyword id="KW-0137">Centromere</keyword>
<keyword id="KW-0158">Chromosome</keyword>
<keyword id="KW-0175">Coiled coil</keyword>
<keyword id="KW-0995">Kinetochore</keyword>
<keyword id="KW-0498">Mitosis</keyword>
<keyword id="KW-0539">Nucleus</keyword>
<keyword id="KW-1185">Reference proteome</keyword>
<reference key="1">
    <citation type="journal article" date="2005" name="Science">
        <title>The genome of the basidiomycetous yeast and human pathogen Cryptococcus neoformans.</title>
        <authorList>
            <person name="Loftus B.J."/>
            <person name="Fung E."/>
            <person name="Roncaglia P."/>
            <person name="Rowley D."/>
            <person name="Amedeo P."/>
            <person name="Bruno D."/>
            <person name="Vamathevan J."/>
            <person name="Miranda M."/>
            <person name="Anderson I.J."/>
            <person name="Fraser J.A."/>
            <person name="Allen J.E."/>
            <person name="Bosdet I.E."/>
            <person name="Brent M.R."/>
            <person name="Chiu R."/>
            <person name="Doering T.L."/>
            <person name="Donlin M.J."/>
            <person name="D'Souza C.A."/>
            <person name="Fox D.S."/>
            <person name="Grinberg V."/>
            <person name="Fu J."/>
            <person name="Fukushima M."/>
            <person name="Haas B.J."/>
            <person name="Huang J.C."/>
            <person name="Janbon G."/>
            <person name="Jones S.J.M."/>
            <person name="Koo H.L."/>
            <person name="Krzywinski M.I."/>
            <person name="Kwon-Chung K.J."/>
            <person name="Lengeler K.B."/>
            <person name="Maiti R."/>
            <person name="Marra M.A."/>
            <person name="Marra R.E."/>
            <person name="Mathewson C.A."/>
            <person name="Mitchell T.G."/>
            <person name="Pertea M."/>
            <person name="Riggs F.R."/>
            <person name="Salzberg S.L."/>
            <person name="Schein J.E."/>
            <person name="Shvartsbeyn A."/>
            <person name="Shin H."/>
            <person name="Shumway M."/>
            <person name="Specht C.A."/>
            <person name="Suh B.B."/>
            <person name="Tenney A."/>
            <person name="Utterback T.R."/>
            <person name="Wickes B.L."/>
            <person name="Wortman J.R."/>
            <person name="Wye N.H."/>
            <person name="Kronstad J.W."/>
            <person name="Lodge J.K."/>
            <person name="Heitman J."/>
            <person name="Davis R.W."/>
            <person name="Fraser C.M."/>
            <person name="Hyman R.W."/>
        </authorList>
    </citation>
    <scope>NUCLEOTIDE SEQUENCE [LARGE SCALE GENOMIC DNA]</scope>
    <source>
        <strain>JEC21 / ATCC MYA-565</strain>
    </source>
</reference>
<dbReference type="EMBL" id="AE017345">
    <property type="protein sequence ID" value="AAW43605.1"/>
    <property type="molecule type" value="Genomic_DNA"/>
</dbReference>
<dbReference type="RefSeq" id="XP_570912.1">
    <property type="nucleotide sequence ID" value="XM_570912.1"/>
</dbReference>
<dbReference type="SMR" id="P0CR66"/>
<dbReference type="FunCoup" id="P0CR66">
    <property type="interactions" value="119"/>
</dbReference>
<dbReference type="STRING" id="214684.P0CR66"/>
<dbReference type="PaxDb" id="214684-P0CR66"/>
<dbReference type="EnsemblFungi" id="AAW43605">
    <property type="protein sequence ID" value="AAW43605"/>
    <property type="gene ID" value="CNE03460"/>
</dbReference>
<dbReference type="VEuPathDB" id="FungiDB:CNE03460"/>
<dbReference type="eggNOG" id="KOG4657">
    <property type="taxonomic scope" value="Eukaryota"/>
</dbReference>
<dbReference type="HOGENOM" id="CLU_093947_0_0_1"/>
<dbReference type="InParanoid" id="P0CR66"/>
<dbReference type="OMA" id="HEDQRMK"/>
<dbReference type="OrthoDB" id="4056921at2759"/>
<dbReference type="Proteomes" id="UP000002149">
    <property type="component" value="Chromosome 5"/>
</dbReference>
<dbReference type="GO" id="GO:0031262">
    <property type="term" value="C:Ndc80 complex"/>
    <property type="evidence" value="ECO:0000250"/>
    <property type="project" value="UniProtKB"/>
</dbReference>
<dbReference type="GO" id="GO:0005634">
    <property type="term" value="C:nucleus"/>
    <property type="evidence" value="ECO:0007669"/>
    <property type="project" value="UniProtKB-SubCell"/>
</dbReference>
<dbReference type="GO" id="GO:0051301">
    <property type="term" value="P:cell division"/>
    <property type="evidence" value="ECO:0007669"/>
    <property type="project" value="UniProtKB-KW"/>
</dbReference>
<dbReference type="GO" id="GO:0007059">
    <property type="term" value="P:chromosome segregation"/>
    <property type="evidence" value="ECO:0000318"/>
    <property type="project" value="GO_Central"/>
</dbReference>
<dbReference type="CDD" id="cd23784">
    <property type="entry name" value="RWD_Spc25"/>
    <property type="match status" value="1"/>
</dbReference>
<dbReference type="Gene3D" id="3.30.457.50">
    <property type="entry name" value="Chromosome segregation protein Spc25"/>
    <property type="match status" value="1"/>
</dbReference>
<dbReference type="InterPro" id="IPR045143">
    <property type="entry name" value="Spc25"/>
</dbReference>
<dbReference type="InterPro" id="IPR013255">
    <property type="entry name" value="Spc25_C"/>
</dbReference>
<dbReference type="PANTHER" id="PTHR14281:SF0">
    <property type="entry name" value="KINETOCHORE PROTEIN SPC25"/>
    <property type="match status" value="1"/>
</dbReference>
<dbReference type="PANTHER" id="PTHR14281">
    <property type="entry name" value="KINETOCHORE PROTEIN SPC25-RELATED"/>
    <property type="match status" value="1"/>
</dbReference>
<dbReference type="Pfam" id="PF08234">
    <property type="entry name" value="Spindle_Spc25"/>
    <property type="match status" value="1"/>
</dbReference>
<gene>
    <name type="primary">SPC25</name>
    <name type="ordered locus">CNE03460</name>
</gene>
<protein>
    <recommendedName>
        <fullName>Probable kinetochore protein SPC25</fullName>
    </recommendedName>
</protein>
<name>SPC25_CRYNJ</name>
<comment type="function">
    <text evidence="1">Acts as a component of the essential kinetochore-associated NDC80 complex, which is required for chromosome segregation and spindle checkpoint activity.</text>
</comment>
<comment type="subunit">
    <text evidence="1">Component of the NDC80 complex, which consists of at least NDC80, NUF2 and SPC25.</text>
</comment>
<comment type="subcellular location">
    <subcellularLocation>
        <location evidence="2">Nucleus</location>
    </subcellularLocation>
    <subcellularLocation>
        <location evidence="2">Chromosome</location>
        <location evidence="2">Centromere</location>
        <location evidence="2">Kinetochore</location>
    </subcellularLocation>
    <text evidence="2">Associated with kinetochores.</text>
</comment>
<comment type="similarity">
    <text evidence="4">Belongs to the SPC25 family.</text>
</comment>
<proteinExistence type="inferred from homology"/>